<evidence type="ECO:0000255" key="1">
    <source>
        <dbReference type="HAMAP-Rule" id="MF_02002"/>
    </source>
</evidence>
<comment type="function">
    <text evidence="1">Catalyzes the attachment of isoleucine to tRNA(Ile). As IleRS can inadvertently accommodate and process structurally similar amino acids such as valine, to avoid such errors it has two additional distinct tRNA(Ile)-dependent editing activities. One activity is designated as 'pretransfer' editing and involves the hydrolysis of activated Val-AMP. The other activity is designated 'posttransfer' editing and involves deacylation of mischarged Val-tRNA(Ile).</text>
</comment>
<comment type="catalytic activity">
    <reaction evidence="1">
        <text>tRNA(Ile) + L-isoleucine + ATP = L-isoleucyl-tRNA(Ile) + AMP + diphosphate</text>
        <dbReference type="Rhea" id="RHEA:11060"/>
        <dbReference type="Rhea" id="RHEA-COMP:9666"/>
        <dbReference type="Rhea" id="RHEA-COMP:9695"/>
        <dbReference type="ChEBI" id="CHEBI:30616"/>
        <dbReference type="ChEBI" id="CHEBI:33019"/>
        <dbReference type="ChEBI" id="CHEBI:58045"/>
        <dbReference type="ChEBI" id="CHEBI:78442"/>
        <dbReference type="ChEBI" id="CHEBI:78528"/>
        <dbReference type="ChEBI" id="CHEBI:456215"/>
        <dbReference type="EC" id="6.1.1.5"/>
    </reaction>
</comment>
<comment type="cofactor">
    <cofactor evidence="1">
        <name>Zn(2+)</name>
        <dbReference type="ChEBI" id="CHEBI:29105"/>
    </cofactor>
    <text evidence="1">Binds 1 zinc ion per subunit.</text>
</comment>
<comment type="subunit">
    <text evidence="1">Monomer.</text>
</comment>
<comment type="subcellular location">
    <subcellularLocation>
        <location evidence="1">Cytoplasm</location>
    </subcellularLocation>
</comment>
<comment type="domain">
    <text evidence="1">IleRS has two distinct active sites: one for aminoacylation and one for editing. The misactivated valine is translocated from the active site to the editing site, which sterically excludes the correctly activated isoleucine. The single editing site contains two valyl binding pockets, one specific for each substrate (Val-AMP or Val-tRNA(Ile)).</text>
</comment>
<comment type="similarity">
    <text evidence="1">Belongs to the class-I aminoacyl-tRNA synthetase family. IleS type 1 subfamily.</text>
</comment>
<gene>
    <name evidence="1" type="primary">ileS</name>
    <name type="ordered locus">syc1669_d</name>
</gene>
<dbReference type="EC" id="6.1.1.5" evidence="1"/>
<dbReference type="EMBL" id="AP008231">
    <property type="protein sequence ID" value="BAD79859.1"/>
    <property type="molecule type" value="Genomic_DNA"/>
</dbReference>
<dbReference type="RefSeq" id="WP_011243979.1">
    <property type="nucleotide sequence ID" value="NZ_CP085785.1"/>
</dbReference>
<dbReference type="SMR" id="Q5N1G1"/>
<dbReference type="GeneID" id="72431326"/>
<dbReference type="KEGG" id="syc:syc1669_d"/>
<dbReference type="eggNOG" id="COG0060">
    <property type="taxonomic scope" value="Bacteria"/>
</dbReference>
<dbReference type="Proteomes" id="UP000001175">
    <property type="component" value="Chromosome"/>
</dbReference>
<dbReference type="GO" id="GO:0005737">
    <property type="term" value="C:cytoplasm"/>
    <property type="evidence" value="ECO:0007669"/>
    <property type="project" value="UniProtKB-SubCell"/>
</dbReference>
<dbReference type="GO" id="GO:0002161">
    <property type="term" value="F:aminoacyl-tRNA deacylase activity"/>
    <property type="evidence" value="ECO:0007669"/>
    <property type="project" value="InterPro"/>
</dbReference>
<dbReference type="GO" id="GO:0005524">
    <property type="term" value="F:ATP binding"/>
    <property type="evidence" value="ECO:0007669"/>
    <property type="project" value="UniProtKB-UniRule"/>
</dbReference>
<dbReference type="GO" id="GO:0004822">
    <property type="term" value="F:isoleucine-tRNA ligase activity"/>
    <property type="evidence" value="ECO:0007669"/>
    <property type="project" value="UniProtKB-UniRule"/>
</dbReference>
<dbReference type="GO" id="GO:0000049">
    <property type="term" value="F:tRNA binding"/>
    <property type="evidence" value="ECO:0007669"/>
    <property type="project" value="InterPro"/>
</dbReference>
<dbReference type="GO" id="GO:0008270">
    <property type="term" value="F:zinc ion binding"/>
    <property type="evidence" value="ECO:0007669"/>
    <property type="project" value="UniProtKB-UniRule"/>
</dbReference>
<dbReference type="GO" id="GO:0006428">
    <property type="term" value="P:isoleucyl-tRNA aminoacylation"/>
    <property type="evidence" value="ECO:0007669"/>
    <property type="project" value="UniProtKB-UniRule"/>
</dbReference>
<dbReference type="CDD" id="cd07960">
    <property type="entry name" value="Anticodon_Ia_Ile_BEm"/>
    <property type="match status" value="1"/>
</dbReference>
<dbReference type="CDD" id="cd00818">
    <property type="entry name" value="IleRS_core"/>
    <property type="match status" value="1"/>
</dbReference>
<dbReference type="FunFam" id="1.10.730.20:FF:000001">
    <property type="entry name" value="Isoleucine--tRNA ligase"/>
    <property type="match status" value="1"/>
</dbReference>
<dbReference type="FunFam" id="3.40.50.620:FF:000152">
    <property type="entry name" value="Isoleucine--tRNA ligase"/>
    <property type="match status" value="1"/>
</dbReference>
<dbReference type="FunFam" id="3.40.50.620:FF:000128">
    <property type="entry name" value="Isoleucyl-tRNA synthetase 2, mitochondrial"/>
    <property type="match status" value="1"/>
</dbReference>
<dbReference type="FunFam" id="3.90.740.10:FF:000009">
    <property type="entry name" value="Isoleucyl-tRNA synthetase 2, mitochondrial"/>
    <property type="match status" value="1"/>
</dbReference>
<dbReference type="Gene3D" id="1.10.730.20">
    <property type="match status" value="1"/>
</dbReference>
<dbReference type="Gene3D" id="3.40.50.620">
    <property type="entry name" value="HUPs"/>
    <property type="match status" value="2"/>
</dbReference>
<dbReference type="Gene3D" id="1.10.10.830">
    <property type="entry name" value="Ile-tRNA synthetase CP2 domain-like"/>
    <property type="match status" value="1"/>
</dbReference>
<dbReference type="Gene3D" id="3.90.740.10">
    <property type="entry name" value="Valyl/Leucyl/Isoleucyl-tRNA synthetase, editing domain"/>
    <property type="match status" value="1"/>
</dbReference>
<dbReference type="HAMAP" id="MF_02002">
    <property type="entry name" value="Ile_tRNA_synth_type1"/>
    <property type="match status" value="1"/>
</dbReference>
<dbReference type="InterPro" id="IPR001412">
    <property type="entry name" value="aa-tRNA-synth_I_CS"/>
</dbReference>
<dbReference type="InterPro" id="IPR002300">
    <property type="entry name" value="aa-tRNA-synth_Ia"/>
</dbReference>
<dbReference type="InterPro" id="IPR033708">
    <property type="entry name" value="Anticodon_Ile_BEm"/>
</dbReference>
<dbReference type="InterPro" id="IPR002301">
    <property type="entry name" value="Ile-tRNA-ligase"/>
</dbReference>
<dbReference type="InterPro" id="IPR023585">
    <property type="entry name" value="Ile-tRNA-ligase_type1"/>
</dbReference>
<dbReference type="InterPro" id="IPR050081">
    <property type="entry name" value="Ile-tRNA_ligase"/>
</dbReference>
<dbReference type="InterPro" id="IPR013155">
    <property type="entry name" value="M/V/L/I-tRNA-synth_anticd-bd"/>
</dbReference>
<dbReference type="InterPro" id="IPR014729">
    <property type="entry name" value="Rossmann-like_a/b/a_fold"/>
</dbReference>
<dbReference type="InterPro" id="IPR009080">
    <property type="entry name" value="tRNAsynth_Ia_anticodon-bd"/>
</dbReference>
<dbReference type="InterPro" id="IPR009008">
    <property type="entry name" value="Val/Leu/Ile-tRNA-synth_edit"/>
</dbReference>
<dbReference type="InterPro" id="IPR010663">
    <property type="entry name" value="Znf_FPG/IleRS"/>
</dbReference>
<dbReference type="NCBIfam" id="TIGR00392">
    <property type="entry name" value="ileS"/>
    <property type="match status" value="1"/>
</dbReference>
<dbReference type="PANTHER" id="PTHR42765:SF1">
    <property type="entry name" value="ISOLEUCINE--TRNA LIGASE, MITOCHONDRIAL"/>
    <property type="match status" value="1"/>
</dbReference>
<dbReference type="PANTHER" id="PTHR42765">
    <property type="entry name" value="SOLEUCYL-TRNA SYNTHETASE"/>
    <property type="match status" value="1"/>
</dbReference>
<dbReference type="Pfam" id="PF08264">
    <property type="entry name" value="Anticodon_1"/>
    <property type="match status" value="1"/>
</dbReference>
<dbReference type="Pfam" id="PF00133">
    <property type="entry name" value="tRNA-synt_1"/>
    <property type="match status" value="1"/>
</dbReference>
<dbReference type="Pfam" id="PF06827">
    <property type="entry name" value="zf-FPG_IleRS"/>
    <property type="match status" value="1"/>
</dbReference>
<dbReference type="PRINTS" id="PR00984">
    <property type="entry name" value="TRNASYNTHILE"/>
</dbReference>
<dbReference type="SUPFAM" id="SSF47323">
    <property type="entry name" value="Anticodon-binding domain of a subclass of class I aminoacyl-tRNA synthetases"/>
    <property type="match status" value="1"/>
</dbReference>
<dbReference type="SUPFAM" id="SSF52374">
    <property type="entry name" value="Nucleotidylyl transferase"/>
    <property type="match status" value="1"/>
</dbReference>
<dbReference type="SUPFAM" id="SSF50677">
    <property type="entry name" value="ValRS/IleRS/LeuRS editing domain"/>
    <property type="match status" value="1"/>
</dbReference>
<dbReference type="PROSITE" id="PS00178">
    <property type="entry name" value="AA_TRNA_LIGASE_I"/>
    <property type="match status" value="1"/>
</dbReference>
<accession>Q5N1G1</accession>
<protein>
    <recommendedName>
        <fullName evidence="1">Isoleucine--tRNA ligase</fullName>
        <ecNumber evidence="1">6.1.1.5</ecNumber>
    </recommendedName>
    <alternativeName>
        <fullName evidence="1">Isoleucyl-tRNA synthetase</fullName>
        <shortName evidence="1">IleRS</shortName>
    </alternativeName>
</protein>
<organism>
    <name type="scientific">Synechococcus sp. (strain ATCC 27144 / PCC 6301 / SAUG 1402/1)</name>
    <name type="common">Anacystis nidulans</name>
    <dbReference type="NCBI Taxonomy" id="269084"/>
    <lineage>
        <taxon>Bacteria</taxon>
        <taxon>Bacillati</taxon>
        <taxon>Cyanobacteriota</taxon>
        <taxon>Cyanophyceae</taxon>
        <taxon>Synechococcales</taxon>
        <taxon>Synechococcaceae</taxon>
        <taxon>Synechococcus</taxon>
    </lineage>
</organism>
<keyword id="KW-0030">Aminoacyl-tRNA synthetase</keyword>
<keyword id="KW-0067">ATP-binding</keyword>
<keyword id="KW-0963">Cytoplasm</keyword>
<keyword id="KW-0436">Ligase</keyword>
<keyword id="KW-0479">Metal-binding</keyword>
<keyword id="KW-0547">Nucleotide-binding</keyword>
<keyword id="KW-0648">Protein biosynthesis</keyword>
<keyword id="KW-0862">Zinc</keyword>
<reference key="1">
    <citation type="journal article" date="2007" name="Photosyn. Res.">
        <title>Complete nucleotide sequence of the freshwater unicellular cyanobacterium Synechococcus elongatus PCC 6301 chromosome: gene content and organization.</title>
        <authorList>
            <person name="Sugita C."/>
            <person name="Ogata K."/>
            <person name="Shikata M."/>
            <person name="Jikuya H."/>
            <person name="Takano J."/>
            <person name="Furumichi M."/>
            <person name="Kanehisa M."/>
            <person name="Omata T."/>
            <person name="Sugiura M."/>
            <person name="Sugita M."/>
        </authorList>
    </citation>
    <scope>NUCLEOTIDE SEQUENCE [LARGE SCALE GENOMIC DNA]</scope>
    <source>
        <strain>ATCC 27144 / PCC 6301 / SAUG 1402/1</strain>
    </source>
</reference>
<sequence length="954" mass="107414">MAEVSAYKDTLNLLQTPFNMRANAPVREPEIQQFWADRQIYETLSRQNPGAPFVLHDGPPYANGALHMGHALNKTLKDIINKYQLLQGRKVRYVPGWDCHGLPIELKVLQELSSEERRNLTPLTLRQKAKAYALAQVEQQSQSFQRYGVWADWDAPYLTLTPEYEAAQIDVFGQMVLKGYIYRGLKPVHWSPSSRTALAEAELEYPDGHTSRSIYVAMPIVQLSEAAQPLLGNYANLALAIWTTTPWTIPANLAVAVNGELTYAVVQAGDCHLIVAAELAESLSKTFATELTVLATFPGSVLEHSRYRHPLYDRESPVVIGGDYITTESGTGLVHTAPGHGQDDFIVGNRYGLEVFCPVDDKGDFTAAVGDRLVGKNVLKDANAAVIEWLTEVGALLKEESYAHRYPYDWRTKKPTIFRATEQWFASVEGFREQALQAIAEVDWIPAQGENRITSMVSERSDWCISRQRTWGVPIPVFYDEESGEALLNAETIAHVRAIVAERGSDAWWELDVADLLPEPYRSNGRRYRKGTDTMDVWFDSGSSWAAVASQREGLHYPADLYLEGSDQHRGWFQSSLLTSVACNGHAPYRRVLTHGFALDEKGRKMSKSLGNVVDPAIVINGGKDQKQEPPYGADVLRLWVSSVDYSSDVPIGKNILKQMADVYRKIRNTARFLLGNLHDFDPAKDALPWEKLPELDRYLLHRLREVILEIQDAFESFQFFRFFQTVQNFCVVDLSNFYLDIGKDRLYISAPDSLRRRSCQTVLAICVEALATAIAPVLSHMAEDIWQSLPYPARTKSVFQAGWVQLQDDWNQPELAAKWQQLRDLRSEVNKVLEQARRDQAIGSSLEAKLQLWVADSDWRAALADRNPADSLSGTAVDDLRYLFLVSQVELRDQPTGLTEAKYHAQTEDWAIAVVDAEGQKCDRCWNYSTTVGQSSEHPDLCDRCVSALQGTF</sequence>
<feature type="chain" id="PRO_0000098490" description="Isoleucine--tRNA ligase">
    <location>
        <begin position="1"/>
        <end position="954"/>
    </location>
</feature>
<feature type="short sequence motif" description="'HIGH' region">
    <location>
        <begin position="60"/>
        <end position="70"/>
    </location>
</feature>
<feature type="short sequence motif" description="'KMSKS' region">
    <location>
        <begin position="605"/>
        <end position="609"/>
    </location>
</feature>
<feature type="binding site" evidence="1">
    <location>
        <position position="564"/>
    </location>
    <ligand>
        <name>L-isoleucyl-5'-AMP</name>
        <dbReference type="ChEBI" id="CHEBI:178002"/>
    </ligand>
</feature>
<feature type="binding site" evidence="1">
    <location>
        <position position="608"/>
    </location>
    <ligand>
        <name>ATP</name>
        <dbReference type="ChEBI" id="CHEBI:30616"/>
    </ligand>
</feature>
<feature type="binding site" evidence="1">
    <location>
        <position position="923"/>
    </location>
    <ligand>
        <name>Zn(2+)</name>
        <dbReference type="ChEBI" id="CHEBI:29105"/>
    </ligand>
</feature>
<feature type="binding site" evidence="1">
    <location>
        <position position="926"/>
    </location>
    <ligand>
        <name>Zn(2+)</name>
        <dbReference type="ChEBI" id="CHEBI:29105"/>
    </ligand>
</feature>
<feature type="binding site" evidence="1">
    <location>
        <position position="943"/>
    </location>
    <ligand>
        <name>Zn(2+)</name>
        <dbReference type="ChEBI" id="CHEBI:29105"/>
    </ligand>
</feature>
<feature type="binding site" evidence="1">
    <location>
        <position position="946"/>
    </location>
    <ligand>
        <name>Zn(2+)</name>
        <dbReference type="ChEBI" id="CHEBI:29105"/>
    </ligand>
</feature>
<name>SYI_SYNP6</name>
<proteinExistence type="inferred from homology"/>